<keyword id="KW-0521">NADP</keyword>
<keyword id="KW-0560">Oxidoreductase</keyword>
<keyword id="KW-0627">Porphyrin biosynthesis</keyword>
<keyword id="KW-1185">Reference proteome</keyword>
<evidence type="ECO:0000255" key="1">
    <source>
        <dbReference type="HAMAP-Rule" id="MF_00087"/>
    </source>
</evidence>
<evidence type="ECO:0000256" key="2">
    <source>
        <dbReference type="SAM" id="MobiDB-lite"/>
    </source>
</evidence>
<dbReference type="EC" id="1.2.1.70" evidence="1"/>
<dbReference type="EMBL" id="CP000544">
    <property type="protein sequence ID" value="ABM61769.1"/>
    <property type="molecule type" value="Genomic_DNA"/>
</dbReference>
<dbReference type="RefSeq" id="WP_011813792.1">
    <property type="nucleotide sequence ID" value="NC_008789.1"/>
</dbReference>
<dbReference type="SMR" id="A1WVQ7"/>
<dbReference type="STRING" id="349124.Hhal_0993"/>
<dbReference type="KEGG" id="hha:Hhal_0993"/>
<dbReference type="eggNOG" id="COG0373">
    <property type="taxonomic scope" value="Bacteria"/>
</dbReference>
<dbReference type="HOGENOM" id="CLU_035113_2_2_6"/>
<dbReference type="OrthoDB" id="110209at2"/>
<dbReference type="UniPathway" id="UPA00251">
    <property type="reaction ID" value="UER00316"/>
</dbReference>
<dbReference type="Proteomes" id="UP000000647">
    <property type="component" value="Chromosome"/>
</dbReference>
<dbReference type="GO" id="GO:0008883">
    <property type="term" value="F:glutamyl-tRNA reductase activity"/>
    <property type="evidence" value="ECO:0007669"/>
    <property type="project" value="UniProtKB-UniRule"/>
</dbReference>
<dbReference type="GO" id="GO:0050661">
    <property type="term" value="F:NADP binding"/>
    <property type="evidence" value="ECO:0007669"/>
    <property type="project" value="InterPro"/>
</dbReference>
<dbReference type="GO" id="GO:0019353">
    <property type="term" value="P:protoporphyrinogen IX biosynthetic process from glutamate"/>
    <property type="evidence" value="ECO:0007669"/>
    <property type="project" value="TreeGrafter"/>
</dbReference>
<dbReference type="CDD" id="cd05213">
    <property type="entry name" value="NAD_bind_Glutamyl_tRNA_reduct"/>
    <property type="match status" value="1"/>
</dbReference>
<dbReference type="FunFam" id="3.30.460.30:FF:000001">
    <property type="entry name" value="Glutamyl-tRNA reductase"/>
    <property type="match status" value="1"/>
</dbReference>
<dbReference type="FunFam" id="3.40.50.720:FF:000031">
    <property type="entry name" value="Glutamyl-tRNA reductase"/>
    <property type="match status" value="1"/>
</dbReference>
<dbReference type="Gene3D" id="3.30.460.30">
    <property type="entry name" value="Glutamyl-tRNA reductase, N-terminal domain"/>
    <property type="match status" value="1"/>
</dbReference>
<dbReference type="Gene3D" id="3.40.50.720">
    <property type="entry name" value="NAD(P)-binding Rossmann-like Domain"/>
    <property type="match status" value="1"/>
</dbReference>
<dbReference type="HAMAP" id="MF_00087">
    <property type="entry name" value="Glu_tRNA_reductase"/>
    <property type="match status" value="1"/>
</dbReference>
<dbReference type="InterPro" id="IPR000343">
    <property type="entry name" value="4pyrrol_synth_GluRdtase"/>
</dbReference>
<dbReference type="InterPro" id="IPR015896">
    <property type="entry name" value="4pyrrol_synth_GluRdtase_dimer"/>
</dbReference>
<dbReference type="InterPro" id="IPR015895">
    <property type="entry name" value="4pyrrol_synth_GluRdtase_N"/>
</dbReference>
<dbReference type="InterPro" id="IPR018214">
    <property type="entry name" value="GluRdtase_CS"/>
</dbReference>
<dbReference type="InterPro" id="IPR036453">
    <property type="entry name" value="GluRdtase_dimer_dom_sf"/>
</dbReference>
<dbReference type="InterPro" id="IPR036343">
    <property type="entry name" value="GluRdtase_N_sf"/>
</dbReference>
<dbReference type="InterPro" id="IPR036291">
    <property type="entry name" value="NAD(P)-bd_dom_sf"/>
</dbReference>
<dbReference type="InterPro" id="IPR006151">
    <property type="entry name" value="Shikm_DH/Glu-tRNA_Rdtase"/>
</dbReference>
<dbReference type="NCBIfam" id="TIGR01035">
    <property type="entry name" value="hemA"/>
    <property type="match status" value="1"/>
</dbReference>
<dbReference type="PANTHER" id="PTHR43013">
    <property type="entry name" value="GLUTAMYL-TRNA REDUCTASE"/>
    <property type="match status" value="1"/>
</dbReference>
<dbReference type="PANTHER" id="PTHR43013:SF1">
    <property type="entry name" value="GLUTAMYL-TRNA REDUCTASE"/>
    <property type="match status" value="1"/>
</dbReference>
<dbReference type="Pfam" id="PF00745">
    <property type="entry name" value="GlutR_dimer"/>
    <property type="match status" value="1"/>
</dbReference>
<dbReference type="Pfam" id="PF05201">
    <property type="entry name" value="GlutR_N"/>
    <property type="match status" value="1"/>
</dbReference>
<dbReference type="Pfam" id="PF01488">
    <property type="entry name" value="Shikimate_DH"/>
    <property type="match status" value="1"/>
</dbReference>
<dbReference type="PIRSF" id="PIRSF000445">
    <property type="entry name" value="4pyrrol_synth_GluRdtase"/>
    <property type="match status" value="1"/>
</dbReference>
<dbReference type="SUPFAM" id="SSF69742">
    <property type="entry name" value="Glutamyl tRNA-reductase catalytic, N-terminal domain"/>
    <property type="match status" value="1"/>
</dbReference>
<dbReference type="SUPFAM" id="SSF69075">
    <property type="entry name" value="Glutamyl tRNA-reductase dimerization domain"/>
    <property type="match status" value="1"/>
</dbReference>
<dbReference type="SUPFAM" id="SSF51735">
    <property type="entry name" value="NAD(P)-binding Rossmann-fold domains"/>
    <property type="match status" value="1"/>
</dbReference>
<dbReference type="PROSITE" id="PS00747">
    <property type="entry name" value="GLUTR"/>
    <property type="match status" value="1"/>
</dbReference>
<comment type="function">
    <text evidence="1">Catalyzes the NADPH-dependent reduction of glutamyl-tRNA(Glu) to glutamate 1-semialdehyde (GSA).</text>
</comment>
<comment type="catalytic activity">
    <reaction evidence="1">
        <text>(S)-4-amino-5-oxopentanoate + tRNA(Glu) + NADP(+) = L-glutamyl-tRNA(Glu) + NADPH + H(+)</text>
        <dbReference type="Rhea" id="RHEA:12344"/>
        <dbReference type="Rhea" id="RHEA-COMP:9663"/>
        <dbReference type="Rhea" id="RHEA-COMP:9680"/>
        <dbReference type="ChEBI" id="CHEBI:15378"/>
        <dbReference type="ChEBI" id="CHEBI:57501"/>
        <dbReference type="ChEBI" id="CHEBI:57783"/>
        <dbReference type="ChEBI" id="CHEBI:58349"/>
        <dbReference type="ChEBI" id="CHEBI:78442"/>
        <dbReference type="ChEBI" id="CHEBI:78520"/>
        <dbReference type="EC" id="1.2.1.70"/>
    </reaction>
</comment>
<comment type="pathway">
    <text evidence="1">Porphyrin-containing compound metabolism; protoporphyrin-IX biosynthesis; 5-aminolevulinate from L-glutamyl-tRNA(Glu): step 1/2.</text>
</comment>
<comment type="subunit">
    <text evidence="1">Homodimer.</text>
</comment>
<comment type="domain">
    <text evidence="1">Possesses an unusual extended V-shaped dimeric structure with each monomer consisting of three distinct domains arranged along a curved 'spinal' alpha-helix. The N-terminal catalytic domain specifically recognizes the glutamate moiety of the substrate. The second domain is the NADPH-binding domain, and the third C-terminal domain is responsible for dimerization.</text>
</comment>
<comment type="miscellaneous">
    <text evidence="1">During catalysis, the active site Cys acts as a nucleophile attacking the alpha-carbonyl group of tRNA-bound glutamate with the formation of a thioester intermediate between enzyme and glutamate, and the concomitant release of tRNA(Glu). The thioester intermediate is finally reduced by direct hydride transfer from NADPH, to form the product GSA.</text>
</comment>
<comment type="similarity">
    <text evidence="1">Belongs to the glutamyl-tRNA reductase family.</text>
</comment>
<protein>
    <recommendedName>
        <fullName evidence="1">Glutamyl-tRNA reductase</fullName>
        <shortName evidence="1">GluTR</shortName>
        <ecNumber evidence="1">1.2.1.70</ecNumber>
    </recommendedName>
</protein>
<name>HEM1_HALHL</name>
<reference key="1">
    <citation type="submission" date="2006-12" db="EMBL/GenBank/DDBJ databases">
        <title>Complete sequence of Halorhodospira halophila SL1.</title>
        <authorList>
            <consortium name="US DOE Joint Genome Institute"/>
            <person name="Copeland A."/>
            <person name="Lucas S."/>
            <person name="Lapidus A."/>
            <person name="Barry K."/>
            <person name="Detter J.C."/>
            <person name="Glavina del Rio T."/>
            <person name="Hammon N."/>
            <person name="Israni S."/>
            <person name="Dalin E."/>
            <person name="Tice H."/>
            <person name="Pitluck S."/>
            <person name="Saunders E."/>
            <person name="Brettin T."/>
            <person name="Bruce D."/>
            <person name="Han C."/>
            <person name="Tapia R."/>
            <person name="Schmutz J."/>
            <person name="Larimer F."/>
            <person name="Land M."/>
            <person name="Hauser L."/>
            <person name="Kyrpides N."/>
            <person name="Mikhailova N."/>
            <person name="Hoff W."/>
            <person name="Richardson P."/>
        </authorList>
    </citation>
    <scope>NUCLEOTIDE SEQUENCE [LARGE SCALE GENOMIC DNA]</scope>
    <source>
        <strain>DSM 244 / SL1</strain>
    </source>
</reference>
<sequence length="449" mass="49150">MPLFAIGLNHDSAPVAVRESLAFNAEALGDALQSARSETGADEVAILSTCNRTEIYIRLPHTDPEVVIGWLTRHQRVDLRKVRPHLYVRRSTEAMRHLMRVSAGLDSLVLGEPQILGQVKDAYHKAANAGCLGAVLERLFQHAFAVAKQVRTDTDIGSNPISVAFAAVTMAKQIFDDFPKRTAVLVGAGETIELVARHLGQQGIGQVLVANRNVERAKRLAEAHDGEAMSLNDLPRRLPEADVVVSSTGSSLPILGKGTVERAVRARRHKPMFMLDLAVPRDIEPEAGEMDDVYLYTVDDLRGVVAENMRSRQDAATQAEAIVEQQVRHYLEWRRARDAGEAIRSFRSRAESYARATRAQAARQLSRGEDPFEVIEWLTHTLTRRLVHAPTVGLRAAAATGDRTRIQHALETLAIDQQLVERSSEGDDSQQAGADGGAARGDRRAAGGS</sequence>
<gene>
    <name evidence="1" type="primary">hemA</name>
    <name type="ordered locus">Hhal_0993</name>
</gene>
<accession>A1WVQ7</accession>
<feature type="chain" id="PRO_1000004626" description="Glutamyl-tRNA reductase">
    <location>
        <begin position="1"/>
        <end position="449"/>
    </location>
</feature>
<feature type="region of interest" description="Disordered" evidence="2">
    <location>
        <begin position="418"/>
        <end position="449"/>
    </location>
</feature>
<feature type="compositionally biased region" description="Basic and acidic residues" evidence="2">
    <location>
        <begin position="440"/>
        <end position="449"/>
    </location>
</feature>
<feature type="active site" description="Nucleophile" evidence="1">
    <location>
        <position position="50"/>
    </location>
</feature>
<feature type="binding site" evidence="1">
    <location>
        <begin position="49"/>
        <end position="52"/>
    </location>
    <ligand>
        <name>substrate</name>
    </ligand>
</feature>
<feature type="binding site" evidence="1">
    <location>
        <position position="107"/>
    </location>
    <ligand>
        <name>substrate</name>
    </ligand>
</feature>
<feature type="binding site" evidence="1">
    <location>
        <begin position="112"/>
        <end position="114"/>
    </location>
    <ligand>
        <name>substrate</name>
    </ligand>
</feature>
<feature type="binding site" evidence="1">
    <location>
        <position position="118"/>
    </location>
    <ligand>
        <name>substrate</name>
    </ligand>
</feature>
<feature type="binding site" evidence="1">
    <location>
        <begin position="187"/>
        <end position="192"/>
    </location>
    <ligand>
        <name>NADP(+)</name>
        <dbReference type="ChEBI" id="CHEBI:58349"/>
    </ligand>
</feature>
<feature type="site" description="Important for activity" evidence="1">
    <location>
        <position position="97"/>
    </location>
</feature>
<organism>
    <name type="scientific">Halorhodospira halophila (strain DSM 244 / SL1)</name>
    <name type="common">Ectothiorhodospira halophila (strain DSM 244 / SL1)</name>
    <dbReference type="NCBI Taxonomy" id="349124"/>
    <lineage>
        <taxon>Bacteria</taxon>
        <taxon>Pseudomonadati</taxon>
        <taxon>Pseudomonadota</taxon>
        <taxon>Gammaproteobacteria</taxon>
        <taxon>Chromatiales</taxon>
        <taxon>Ectothiorhodospiraceae</taxon>
        <taxon>Halorhodospira</taxon>
    </lineage>
</organism>
<proteinExistence type="inferred from homology"/>